<gene>
    <name evidence="1" type="primary">psd</name>
    <name type="ordered locus">Pcryo_2218</name>
</gene>
<sequence length="277" mass="30603">MNVFTTLQQFVPQQKISKVAGRLAASRHPWVKRTFIRSFAKAYDVSLDEYERQSLNAYESFNDFFTRELQDNARIIDASINGIVSPADGMISQLGQIHDHKLLQAKGRDYDIGQLLADSADGDYFADGSFATVYLAPSNYHRVHMPFDGILTKTRYVPGTLFSVNNTTAANVPDLFARNERLVCLFDTAYGKAAVVMVGAMIVAGIETVATGKISRTDDIQEADHDMSFKKGDELGRFYLGSTAIVVLPKAAKTDWQDTMQHGSIVQMGQLLGSAKT</sequence>
<organism>
    <name type="scientific">Psychrobacter cryohalolentis (strain ATCC BAA-1226 / DSM 17306 / VKM B-2378 / K5)</name>
    <dbReference type="NCBI Taxonomy" id="335284"/>
    <lineage>
        <taxon>Bacteria</taxon>
        <taxon>Pseudomonadati</taxon>
        <taxon>Pseudomonadota</taxon>
        <taxon>Gammaproteobacteria</taxon>
        <taxon>Moraxellales</taxon>
        <taxon>Moraxellaceae</taxon>
        <taxon>Psychrobacter</taxon>
    </lineage>
</organism>
<comment type="function">
    <text evidence="1">Catalyzes the formation of phosphatidylethanolamine (PtdEtn) from phosphatidylserine (PtdSer).</text>
</comment>
<comment type="catalytic activity">
    <reaction evidence="1">
        <text>a 1,2-diacyl-sn-glycero-3-phospho-L-serine + H(+) = a 1,2-diacyl-sn-glycero-3-phosphoethanolamine + CO2</text>
        <dbReference type="Rhea" id="RHEA:20828"/>
        <dbReference type="ChEBI" id="CHEBI:15378"/>
        <dbReference type="ChEBI" id="CHEBI:16526"/>
        <dbReference type="ChEBI" id="CHEBI:57262"/>
        <dbReference type="ChEBI" id="CHEBI:64612"/>
        <dbReference type="EC" id="4.1.1.65"/>
    </reaction>
</comment>
<comment type="cofactor">
    <cofactor evidence="1">
        <name>pyruvate</name>
        <dbReference type="ChEBI" id="CHEBI:15361"/>
    </cofactor>
    <text evidence="1">Binds 1 pyruvoyl group covalently per subunit.</text>
</comment>
<comment type="pathway">
    <text evidence="1">Phospholipid metabolism; phosphatidylethanolamine biosynthesis; phosphatidylethanolamine from CDP-diacylglycerol: step 2/2.</text>
</comment>
<comment type="subunit">
    <text evidence="1">Heterodimer of a large membrane-associated beta subunit and a small pyruvoyl-containing alpha subunit.</text>
</comment>
<comment type="subcellular location">
    <subcellularLocation>
        <location evidence="1">Cell membrane</location>
        <topology evidence="1">Peripheral membrane protein</topology>
    </subcellularLocation>
</comment>
<comment type="PTM">
    <text evidence="1">Is synthesized initially as an inactive proenzyme. Formation of the active enzyme involves a self-maturation process in which the active site pyruvoyl group is generated from an internal serine residue via an autocatalytic post-translational modification. Two non-identical subunits are generated from the proenzyme in this reaction, and the pyruvate is formed at the N-terminus of the alpha chain, which is derived from the carboxyl end of the proenzyme. The autoendoproteolytic cleavage occurs by a canonical serine protease mechanism, in which the side chain hydroxyl group of the serine supplies its oxygen atom to form the C-terminus of the beta chain, while the remainder of the serine residue undergoes an oxidative deamination to produce ammonia and the pyruvoyl prosthetic group on the alpha chain. During this reaction, the Ser that is part of the protease active site of the proenzyme becomes the pyruvoyl prosthetic group, which constitutes an essential element of the active site of the mature decarboxylase.</text>
</comment>
<comment type="similarity">
    <text evidence="1">Belongs to the phosphatidylserine decarboxylase family. PSD-B subfamily. Prokaryotic type I sub-subfamily.</text>
</comment>
<dbReference type="EC" id="4.1.1.65" evidence="1"/>
<dbReference type="EMBL" id="CP000323">
    <property type="protein sequence ID" value="ABE75995.1"/>
    <property type="molecule type" value="Genomic_DNA"/>
</dbReference>
<dbReference type="SMR" id="Q1Q8K8"/>
<dbReference type="STRING" id="335284.Pcryo_2218"/>
<dbReference type="KEGG" id="pcr:Pcryo_2218"/>
<dbReference type="eggNOG" id="COG0688">
    <property type="taxonomic scope" value="Bacteria"/>
</dbReference>
<dbReference type="HOGENOM" id="CLU_029061_4_1_6"/>
<dbReference type="UniPathway" id="UPA00558">
    <property type="reaction ID" value="UER00616"/>
</dbReference>
<dbReference type="Proteomes" id="UP000002425">
    <property type="component" value="Chromosome"/>
</dbReference>
<dbReference type="GO" id="GO:0005886">
    <property type="term" value="C:plasma membrane"/>
    <property type="evidence" value="ECO:0007669"/>
    <property type="project" value="UniProtKB-SubCell"/>
</dbReference>
<dbReference type="GO" id="GO:0004609">
    <property type="term" value="F:phosphatidylserine decarboxylase activity"/>
    <property type="evidence" value="ECO:0007669"/>
    <property type="project" value="UniProtKB-UniRule"/>
</dbReference>
<dbReference type="GO" id="GO:0006646">
    <property type="term" value="P:phosphatidylethanolamine biosynthetic process"/>
    <property type="evidence" value="ECO:0007669"/>
    <property type="project" value="UniProtKB-UniRule"/>
</dbReference>
<dbReference type="HAMAP" id="MF_00662">
    <property type="entry name" value="PS_decarb_PSD_B_type1"/>
    <property type="match status" value="1"/>
</dbReference>
<dbReference type="InterPro" id="IPR003817">
    <property type="entry name" value="PS_Dcarbxylase"/>
</dbReference>
<dbReference type="InterPro" id="IPR033177">
    <property type="entry name" value="PSD-B"/>
</dbReference>
<dbReference type="InterPro" id="IPR033178">
    <property type="entry name" value="PSD_type1_pro"/>
</dbReference>
<dbReference type="NCBIfam" id="TIGR00163">
    <property type="entry name" value="PS_decarb"/>
    <property type="match status" value="1"/>
</dbReference>
<dbReference type="PANTHER" id="PTHR10067">
    <property type="entry name" value="PHOSPHATIDYLSERINE DECARBOXYLASE"/>
    <property type="match status" value="1"/>
</dbReference>
<dbReference type="PANTHER" id="PTHR10067:SF6">
    <property type="entry name" value="PHOSPHATIDYLSERINE DECARBOXYLASE PROENZYME, MITOCHONDRIAL"/>
    <property type="match status" value="1"/>
</dbReference>
<dbReference type="Pfam" id="PF02666">
    <property type="entry name" value="PS_Dcarbxylase"/>
    <property type="match status" value="1"/>
</dbReference>
<evidence type="ECO:0000255" key="1">
    <source>
        <dbReference type="HAMAP-Rule" id="MF_00662"/>
    </source>
</evidence>
<feature type="chain" id="PRO_0000262143" description="Phosphatidylserine decarboxylase beta chain" evidence="1">
    <location>
        <begin position="1"/>
        <end position="241"/>
    </location>
</feature>
<feature type="chain" id="PRO_0000262144" description="Phosphatidylserine decarboxylase alpha chain" evidence="1">
    <location>
        <begin position="242"/>
        <end position="277"/>
    </location>
</feature>
<feature type="active site" description="Charge relay system; for autoendoproteolytic cleavage activity" evidence="1">
    <location>
        <position position="88"/>
    </location>
</feature>
<feature type="active site" description="Charge relay system; for autoendoproteolytic cleavage activity" evidence="1">
    <location>
        <position position="144"/>
    </location>
</feature>
<feature type="active site" description="Charge relay system; for autoendoproteolytic cleavage activity" evidence="1">
    <location>
        <position position="242"/>
    </location>
</feature>
<feature type="active site" description="Schiff-base intermediate with substrate; via pyruvic acid; for decarboxylase activity" evidence="1">
    <location>
        <position position="242"/>
    </location>
</feature>
<feature type="site" description="Cleavage (non-hydrolytic); by autocatalysis" evidence="1">
    <location>
        <begin position="241"/>
        <end position="242"/>
    </location>
</feature>
<feature type="modified residue" description="Pyruvic acid (Ser); by autocatalysis" evidence="1">
    <location>
        <position position="242"/>
    </location>
</feature>
<reference key="1">
    <citation type="submission" date="2006-03" db="EMBL/GenBank/DDBJ databases">
        <title>Complete sequence of chromosome of Psychrobacter cryohalolentis K5.</title>
        <authorList>
            <consortium name="US DOE Joint Genome Institute"/>
            <person name="Copeland A."/>
            <person name="Lucas S."/>
            <person name="Lapidus A."/>
            <person name="Barry K."/>
            <person name="Detter J.C."/>
            <person name="Glavina T."/>
            <person name="Hammon N."/>
            <person name="Israni S."/>
            <person name="Dalin E."/>
            <person name="Tice H."/>
            <person name="Pitluck S."/>
            <person name="Brettin T."/>
            <person name="Bruce D."/>
            <person name="Han C."/>
            <person name="Tapia R."/>
            <person name="Sims D.R."/>
            <person name="Gilna P."/>
            <person name="Schmutz J."/>
            <person name="Larimer F."/>
            <person name="Land M."/>
            <person name="Hauser L."/>
            <person name="Kyrpides N."/>
            <person name="Kim E."/>
            <person name="Richardson P."/>
        </authorList>
    </citation>
    <scope>NUCLEOTIDE SEQUENCE [LARGE SCALE GENOMIC DNA]</scope>
    <source>
        <strain>ATCC BAA-1226 / DSM 17306 / VKM B-2378 / K5</strain>
    </source>
</reference>
<keyword id="KW-1003">Cell membrane</keyword>
<keyword id="KW-0210">Decarboxylase</keyword>
<keyword id="KW-0444">Lipid biosynthesis</keyword>
<keyword id="KW-0443">Lipid metabolism</keyword>
<keyword id="KW-0456">Lyase</keyword>
<keyword id="KW-0472">Membrane</keyword>
<keyword id="KW-0594">Phospholipid biosynthesis</keyword>
<keyword id="KW-1208">Phospholipid metabolism</keyword>
<keyword id="KW-0670">Pyruvate</keyword>
<keyword id="KW-0865">Zymogen</keyword>
<proteinExistence type="inferred from homology"/>
<protein>
    <recommendedName>
        <fullName evidence="1">Phosphatidylserine decarboxylase proenzyme</fullName>
        <ecNumber evidence="1">4.1.1.65</ecNumber>
    </recommendedName>
    <component>
        <recommendedName>
            <fullName evidence="1">Phosphatidylserine decarboxylase alpha chain</fullName>
        </recommendedName>
    </component>
    <component>
        <recommendedName>
            <fullName evidence="1">Phosphatidylserine decarboxylase beta chain</fullName>
        </recommendedName>
    </component>
</protein>
<accession>Q1Q8K8</accession>
<name>PSD_PSYCK</name>